<feature type="chain" id="PRO_1000093378" description="Endonuclease MutS2">
    <location>
        <begin position="1"/>
        <end position="782"/>
    </location>
</feature>
<feature type="domain" description="Smr" evidence="1">
    <location>
        <begin position="707"/>
        <end position="782"/>
    </location>
</feature>
<feature type="binding site" evidence="1">
    <location>
        <begin position="336"/>
        <end position="343"/>
    </location>
    <ligand>
        <name>ATP</name>
        <dbReference type="ChEBI" id="CHEBI:30616"/>
    </ligand>
</feature>
<accession>A6U0W1</accession>
<dbReference type="EC" id="3.1.-.-" evidence="1"/>
<dbReference type="EC" id="3.6.4.-" evidence="1"/>
<dbReference type="EMBL" id="CP000736">
    <property type="protein sequence ID" value="ABR52079.1"/>
    <property type="molecule type" value="Genomic_DNA"/>
</dbReference>
<dbReference type="SMR" id="A6U0W1"/>
<dbReference type="KEGG" id="sah:SaurJH1_1225"/>
<dbReference type="HOGENOM" id="CLU_011252_2_1_9"/>
<dbReference type="GO" id="GO:0005524">
    <property type="term" value="F:ATP binding"/>
    <property type="evidence" value="ECO:0007669"/>
    <property type="project" value="UniProtKB-UniRule"/>
</dbReference>
<dbReference type="GO" id="GO:0016887">
    <property type="term" value="F:ATP hydrolysis activity"/>
    <property type="evidence" value="ECO:0007669"/>
    <property type="project" value="InterPro"/>
</dbReference>
<dbReference type="GO" id="GO:0140664">
    <property type="term" value="F:ATP-dependent DNA damage sensor activity"/>
    <property type="evidence" value="ECO:0007669"/>
    <property type="project" value="InterPro"/>
</dbReference>
<dbReference type="GO" id="GO:0004519">
    <property type="term" value="F:endonuclease activity"/>
    <property type="evidence" value="ECO:0007669"/>
    <property type="project" value="UniProtKB-UniRule"/>
</dbReference>
<dbReference type="GO" id="GO:0030983">
    <property type="term" value="F:mismatched DNA binding"/>
    <property type="evidence" value="ECO:0007669"/>
    <property type="project" value="InterPro"/>
</dbReference>
<dbReference type="GO" id="GO:0043023">
    <property type="term" value="F:ribosomal large subunit binding"/>
    <property type="evidence" value="ECO:0007669"/>
    <property type="project" value="UniProtKB-UniRule"/>
</dbReference>
<dbReference type="GO" id="GO:0019843">
    <property type="term" value="F:rRNA binding"/>
    <property type="evidence" value="ECO:0007669"/>
    <property type="project" value="UniProtKB-UniRule"/>
</dbReference>
<dbReference type="GO" id="GO:0006298">
    <property type="term" value="P:mismatch repair"/>
    <property type="evidence" value="ECO:0007669"/>
    <property type="project" value="InterPro"/>
</dbReference>
<dbReference type="GO" id="GO:0045910">
    <property type="term" value="P:negative regulation of DNA recombination"/>
    <property type="evidence" value="ECO:0007669"/>
    <property type="project" value="InterPro"/>
</dbReference>
<dbReference type="GO" id="GO:0072344">
    <property type="term" value="P:rescue of stalled ribosome"/>
    <property type="evidence" value="ECO:0007669"/>
    <property type="project" value="UniProtKB-UniRule"/>
</dbReference>
<dbReference type="CDD" id="cd03280">
    <property type="entry name" value="ABC_MutS2"/>
    <property type="match status" value="1"/>
</dbReference>
<dbReference type="FunFam" id="3.30.1370.110:FF:000006">
    <property type="entry name" value="Endonuclease MutS2"/>
    <property type="match status" value="1"/>
</dbReference>
<dbReference type="FunFam" id="3.40.50.300:FF:000830">
    <property type="entry name" value="Endonuclease MutS2"/>
    <property type="match status" value="1"/>
</dbReference>
<dbReference type="Gene3D" id="3.30.1370.110">
    <property type="match status" value="1"/>
</dbReference>
<dbReference type="Gene3D" id="3.40.50.300">
    <property type="entry name" value="P-loop containing nucleotide triphosphate hydrolases"/>
    <property type="match status" value="1"/>
</dbReference>
<dbReference type="HAMAP" id="MF_00092">
    <property type="entry name" value="MutS2"/>
    <property type="match status" value="1"/>
</dbReference>
<dbReference type="InterPro" id="IPR000432">
    <property type="entry name" value="DNA_mismatch_repair_MutS_C"/>
</dbReference>
<dbReference type="InterPro" id="IPR007696">
    <property type="entry name" value="DNA_mismatch_repair_MutS_core"/>
</dbReference>
<dbReference type="InterPro" id="IPR036187">
    <property type="entry name" value="DNA_mismatch_repair_MutS_sf"/>
</dbReference>
<dbReference type="InterPro" id="IPR046893">
    <property type="entry name" value="MSSS"/>
</dbReference>
<dbReference type="InterPro" id="IPR045076">
    <property type="entry name" value="MutS"/>
</dbReference>
<dbReference type="InterPro" id="IPR005747">
    <property type="entry name" value="MutS2"/>
</dbReference>
<dbReference type="InterPro" id="IPR027417">
    <property type="entry name" value="P-loop_NTPase"/>
</dbReference>
<dbReference type="InterPro" id="IPR002625">
    <property type="entry name" value="Smr_dom"/>
</dbReference>
<dbReference type="InterPro" id="IPR036063">
    <property type="entry name" value="Smr_dom_sf"/>
</dbReference>
<dbReference type="NCBIfam" id="TIGR01069">
    <property type="entry name" value="mutS2"/>
    <property type="match status" value="1"/>
</dbReference>
<dbReference type="PANTHER" id="PTHR48466:SF2">
    <property type="entry name" value="OS10G0509000 PROTEIN"/>
    <property type="match status" value="1"/>
</dbReference>
<dbReference type="PANTHER" id="PTHR48466">
    <property type="entry name" value="OS10G0509000 PROTEIN-RELATED"/>
    <property type="match status" value="1"/>
</dbReference>
<dbReference type="Pfam" id="PF20297">
    <property type="entry name" value="MSSS"/>
    <property type="match status" value="1"/>
</dbReference>
<dbReference type="Pfam" id="PF00488">
    <property type="entry name" value="MutS_V"/>
    <property type="match status" value="1"/>
</dbReference>
<dbReference type="Pfam" id="PF01713">
    <property type="entry name" value="Smr"/>
    <property type="match status" value="1"/>
</dbReference>
<dbReference type="PIRSF" id="PIRSF005814">
    <property type="entry name" value="MutS_YshD"/>
    <property type="match status" value="1"/>
</dbReference>
<dbReference type="SMART" id="SM00534">
    <property type="entry name" value="MUTSac"/>
    <property type="match status" value="1"/>
</dbReference>
<dbReference type="SMART" id="SM00533">
    <property type="entry name" value="MUTSd"/>
    <property type="match status" value="1"/>
</dbReference>
<dbReference type="SMART" id="SM00463">
    <property type="entry name" value="SMR"/>
    <property type="match status" value="1"/>
</dbReference>
<dbReference type="SUPFAM" id="SSF48334">
    <property type="entry name" value="DNA repair protein MutS, domain III"/>
    <property type="match status" value="1"/>
</dbReference>
<dbReference type="SUPFAM" id="SSF52540">
    <property type="entry name" value="P-loop containing nucleoside triphosphate hydrolases"/>
    <property type="match status" value="1"/>
</dbReference>
<dbReference type="SUPFAM" id="SSF160443">
    <property type="entry name" value="SMR domain-like"/>
    <property type="match status" value="1"/>
</dbReference>
<dbReference type="PROSITE" id="PS00486">
    <property type="entry name" value="DNA_MISMATCH_REPAIR_2"/>
    <property type="match status" value="1"/>
</dbReference>
<dbReference type="PROSITE" id="PS50828">
    <property type="entry name" value="SMR"/>
    <property type="match status" value="1"/>
</dbReference>
<sequence length="782" mass="88714">MRQKTLDVLEFEKIKSLVANETISDLGLEKVNQMMPATNFETVVFQMEETDEIAQIYNKHRLPSLSGLSKVSAFIHRADIGGVLNVSELNLIKRLIQVQNQFKTFYNQLVEEDEGVKYPILDDKMNQLPVLTDLFHQINETCDTYDLYDNASYELQGIRSKISSTNQRIRQNLDRIVKSQANQKKLSDAIVTVRNERNVIPVKAEYRQDFNGIVHDQSASGQTLYIEPSSVVEMNNQISRLRHDEAIEKERILTQLTGYVAADKDALLVTEQVMGQLDFLIAKARYSRSIKGTKPIFKEERTVYLPKAYHPLLNRETVVANTIEFMEDIETVIITGPNTGGKTVTLKTLGLIIVMAQSGLLIPTLDGSQLSVFKNVYCDIGDEQSIEQSLSTFSSHMTNIVEILKHADKHSLVLFDELGAGTDPSEGAALAMSILDHVRKIGSLVMATTHYPELKAYSYNREGVMNASVEFDVDTLSPTYKLLMGVPGRSNAFDISKKLGLSLNIINKAKTMIGTDEKEINEMIESLERNYKRVETQRLELDRLVKEAEQVHDDLSKQYQQFQNYEKSLIEEAKEKANQKIKAATKEADDIIKDLRQLREQKGADVKEHELIDKKKRLDDHYEAKSIKQNVQKQKYDKIVAGDEVKVLSYGQKGEVLEIVNDEEAIVQMGIIKMKLPIEDLEKKQKEKVKPTKMVTRQNRQTIKTELDLRGYRYEDALIELDQYLDQAVLSNYEQVYIIHGKGTGALQKGVQQHLKKHKSVSDFRGGMPSEGGFGVTVATLK</sequence>
<evidence type="ECO:0000255" key="1">
    <source>
        <dbReference type="HAMAP-Rule" id="MF_00092"/>
    </source>
</evidence>
<name>MUTS2_STAA2</name>
<protein>
    <recommendedName>
        <fullName evidence="1">Endonuclease MutS2</fullName>
        <ecNumber evidence="1">3.1.-.-</ecNumber>
    </recommendedName>
    <alternativeName>
        <fullName evidence="1">Ribosome-associated protein quality control-upstream factor</fullName>
        <shortName evidence="1">RQC-upstream factor</shortName>
        <shortName evidence="1">RqcU</shortName>
        <ecNumber evidence="1">3.6.4.-</ecNumber>
    </alternativeName>
</protein>
<proteinExistence type="inferred from homology"/>
<gene>
    <name evidence="1" type="primary">mutS2</name>
    <name evidence="1" type="synonym">rqcU</name>
    <name type="ordered locus">SaurJH1_1225</name>
</gene>
<keyword id="KW-0067">ATP-binding</keyword>
<keyword id="KW-0238">DNA-binding</keyword>
<keyword id="KW-0255">Endonuclease</keyword>
<keyword id="KW-0378">Hydrolase</keyword>
<keyword id="KW-0540">Nuclease</keyword>
<keyword id="KW-0547">Nucleotide-binding</keyword>
<keyword id="KW-0694">RNA-binding</keyword>
<keyword id="KW-0699">rRNA-binding</keyword>
<comment type="function">
    <text evidence="1">Endonuclease that is involved in the suppression of homologous recombination and thus may have a key role in the control of bacterial genetic diversity.</text>
</comment>
<comment type="function">
    <text evidence="1">Acts as a ribosome collision sensor, splitting the ribosome into its 2 subunits. Detects stalled/collided 70S ribosomes which it binds and splits by an ATP-hydrolysis driven conformational change. Acts upstream of the ribosome quality control system (RQC), a ribosome-associated complex that mediates the extraction of incompletely synthesized nascent chains from stalled ribosomes and their subsequent degradation. Probably generates substrates for RQC.</text>
</comment>
<comment type="subunit">
    <text evidence="1">Homodimer. Binds to stalled ribosomes, contacting rRNA.</text>
</comment>
<comment type="similarity">
    <text evidence="1">Belongs to the DNA mismatch repair MutS family. MutS2 subfamily.</text>
</comment>
<organism>
    <name type="scientific">Staphylococcus aureus (strain JH1)</name>
    <dbReference type="NCBI Taxonomy" id="359787"/>
    <lineage>
        <taxon>Bacteria</taxon>
        <taxon>Bacillati</taxon>
        <taxon>Bacillota</taxon>
        <taxon>Bacilli</taxon>
        <taxon>Bacillales</taxon>
        <taxon>Staphylococcaceae</taxon>
        <taxon>Staphylococcus</taxon>
    </lineage>
</organism>
<reference key="1">
    <citation type="submission" date="2007-06" db="EMBL/GenBank/DDBJ databases">
        <title>Complete sequence of chromosome of Staphylococcus aureus subsp. aureus JH1.</title>
        <authorList>
            <consortium name="US DOE Joint Genome Institute"/>
            <person name="Copeland A."/>
            <person name="Lucas S."/>
            <person name="Lapidus A."/>
            <person name="Barry K."/>
            <person name="Detter J.C."/>
            <person name="Glavina del Rio T."/>
            <person name="Hammon N."/>
            <person name="Israni S."/>
            <person name="Dalin E."/>
            <person name="Tice H."/>
            <person name="Pitluck S."/>
            <person name="Chain P."/>
            <person name="Malfatti S."/>
            <person name="Shin M."/>
            <person name="Vergez L."/>
            <person name="Schmutz J."/>
            <person name="Larimer F."/>
            <person name="Land M."/>
            <person name="Hauser L."/>
            <person name="Kyrpides N."/>
            <person name="Ivanova N."/>
            <person name="Tomasz A."/>
            <person name="Richardson P."/>
        </authorList>
    </citation>
    <scope>NUCLEOTIDE SEQUENCE [LARGE SCALE GENOMIC DNA]</scope>
    <source>
        <strain>JH1</strain>
    </source>
</reference>